<proteinExistence type="evidence at protein level"/>
<evidence type="ECO:0000250" key="1">
    <source>
        <dbReference type="UniProtKB" id="P54868"/>
    </source>
</evidence>
<evidence type="ECO:0000255" key="2">
    <source>
        <dbReference type="PROSITE-ProRule" id="PRU10116"/>
    </source>
</evidence>
<evidence type="ECO:0000256" key="3">
    <source>
        <dbReference type="SAM" id="MobiDB-lite"/>
    </source>
</evidence>
<evidence type="ECO:0000269" key="4">
    <source>
    </source>
</evidence>
<evidence type="ECO:0000269" key="5">
    <source>
    </source>
</evidence>
<evidence type="ECO:0000303" key="6">
    <source>
    </source>
</evidence>
<evidence type="ECO:0000305" key="7"/>
<evidence type="ECO:0000305" key="8">
    <source>
    </source>
</evidence>
<evidence type="ECO:0000305" key="9">
    <source>
    </source>
</evidence>
<evidence type="ECO:0000312" key="10">
    <source>
        <dbReference type="HGNC" id="HGNC:5007"/>
    </source>
</evidence>
<evidence type="ECO:0007744" key="11">
    <source>
        <dbReference type="PDB" id="2P8U"/>
    </source>
</evidence>
<evidence type="ECO:0007744" key="12">
    <source>
    </source>
</evidence>
<evidence type="ECO:0007744" key="13">
    <source>
    </source>
</evidence>
<evidence type="ECO:0007744" key="14">
    <source>
    </source>
</evidence>
<evidence type="ECO:0007744" key="15">
    <source>
    </source>
</evidence>
<evidence type="ECO:0007744" key="16">
    <source>
    </source>
</evidence>
<evidence type="ECO:0007744" key="17">
    <source>
    </source>
</evidence>
<evidence type="ECO:0007744" key="18">
    <source>
    </source>
</evidence>
<evidence type="ECO:0007829" key="19">
    <source>
        <dbReference type="PDB" id="2P8U"/>
    </source>
</evidence>
<name>HMCS1_HUMAN</name>
<comment type="function">
    <text evidence="5">Catalyzes the condensation of acetyl-CoA with acetoacetyl-CoA to form HMG-CoA, which is converted by HMG-CoA reductase (HMGCR) into mevalonate, a precursor for cholesterol synthesis.</text>
</comment>
<comment type="catalytic activity">
    <reaction evidence="5">
        <text>acetoacetyl-CoA + acetyl-CoA + H2O = (3S)-3-hydroxy-3-methylglutaryl-CoA + CoA + H(+)</text>
        <dbReference type="Rhea" id="RHEA:10188"/>
        <dbReference type="ChEBI" id="CHEBI:15377"/>
        <dbReference type="ChEBI" id="CHEBI:15378"/>
        <dbReference type="ChEBI" id="CHEBI:43074"/>
        <dbReference type="ChEBI" id="CHEBI:57286"/>
        <dbReference type="ChEBI" id="CHEBI:57287"/>
        <dbReference type="ChEBI" id="CHEBI:57288"/>
        <dbReference type="EC" id="2.3.3.10"/>
    </reaction>
    <physiologicalReaction direction="left-to-right" evidence="9">
        <dbReference type="Rhea" id="RHEA:10189"/>
    </physiologicalReaction>
</comment>
<comment type="biophysicochemical properties">
    <kinetics>
        <KM evidence="5">29 uM for acetyl-CoA</KM>
        <Vmax evidence="5">0.7 umol/min/mg enzyme for acetyl-CoA as substrate</Vmax>
    </kinetics>
</comment>
<comment type="pathway">
    <text>Metabolic intermediate biosynthesis; (R)-mevalonate biosynthesis; (R)-mevalonate from acetyl-CoA: step 2/3.</text>
</comment>
<comment type="subunit">
    <text evidence="4">Homodimer.</text>
</comment>
<comment type="interaction">
    <interactant intactId="EBI-1055448">
        <id>Q01581</id>
    </interactant>
    <interactant intactId="EBI-9846338">
        <id>O76082</id>
        <label>SLC22A5</label>
    </interactant>
    <organismsDiffer>false</organismsDiffer>
    <experiments>2</experiments>
</comment>
<comment type="subcellular location">
    <subcellularLocation>
        <location evidence="8">Cytoplasm</location>
    </subcellularLocation>
</comment>
<comment type="similarity">
    <text evidence="7">Belongs to the thiolase-like superfamily. HMG-CoA synthase family.</text>
</comment>
<comment type="sequence caution" evidence="7">
    <conflict type="erroneous initiation">
        <sequence resource="EMBL-CDS" id="AAH00297"/>
    </conflict>
</comment>
<keyword id="KW-0002">3D-structure</keyword>
<keyword id="KW-0007">Acetylation</keyword>
<keyword id="KW-0152">Cholesterol biosynthesis</keyword>
<keyword id="KW-0153">Cholesterol metabolism</keyword>
<keyword id="KW-0963">Cytoplasm</keyword>
<keyword id="KW-0444">Lipid biosynthesis</keyword>
<keyword id="KW-0443">Lipid metabolism</keyword>
<keyword id="KW-0597">Phosphoprotein</keyword>
<keyword id="KW-1267">Proteomics identification</keyword>
<keyword id="KW-1185">Reference proteome</keyword>
<keyword id="KW-0752">Steroid biosynthesis</keyword>
<keyword id="KW-0753">Steroid metabolism</keyword>
<keyword id="KW-0756">Sterol biosynthesis</keyword>
<keyword id="KW-1207">Sterol metabolism</keyword>
<keyword id="KW-0808">Transferase</keyword>
<protein>
    <recommendedName>
        <fullName evidence="7">Hydroxymethylglutaryl-CoA synthase, cytoplasmic</fullName>
        <shortName evidence="6">HMG-CoA synthase</shortName>
        <ecNumber evidence="5">2.3.3.10</ecNumber>
    </recommendedName>
    <alternativeName>
        <fullName>3-hydroxy-3-methylglutaryl coenzyme A synthase</fullName>
    </alternativeName>
</protein>
<dbReference type="EC" id="2.3.3.10" evidence="5"/>
<dbReference type="EMBL" id="X66435">
    <property type="protein sequence ID" value="CAA47061.1"/>
    <property type="molecule type" value="mRNA"/>
</dbReference>
<dbReference type="EMBL" id="L25798">
    <property type="protein sequence ID" value="AAA62411.1"/>
    <property type="molecule type" value="mRNA"/>
</dbReference>
<dbReference type="EMBL" id="BT007302">
    <property type="protein sequence ID" value="AAP35966.1"/>
    <property type="molecule type" value="mRNA"/>
</dbReference>
<dbReference type="EMBL" id="AK315593">
    <property type="protein sequence ID" value="BAG37965.1"/>
    <property type="molecule type" value="mRNA"/>
</dbReference>
<dbReference type="EMBL" id="CH471119">
    <property type="protein sequence ID" value="EAW56054.1"/>
    <property type="molecule type" value="Genomic_DNA"/>
</dbReference>
<dbReference type="EMBL" id="BC000297">
    <property type="protein sequence ID" value="AAH00297.2"/>
    <property type="status" value="ALT_INIT"/>
    <property type="molecule type" value="mRNA"/>
</dbReference>
<dbReference type="CCDS" id="CCDS34154.1"/>
<dbReference type="PIR" id="S27197">
    <property type="entry name" value="S27197"/>
</dbReference>
<dbReference type="PIR" id="S45497">
    <property type="entry name" value="S45497"/>
</dbReference>
<dbReference type="RefSeq" id="NP_001091742.1">
    <property type="nucleotide sequence ID" value="NM_001098272.3"/>
</dbReference>
<dbReference type="RefSeq" id="NP_001311148.1">
    <property type="nucleotide sequence ID" value="NM_001324219.2"/>
</dbReference>
<dbReference type="RefSeq" id="NP_001311149.1">
    <property type="nucleotide sequence ID" value="NM_001324220.2"/>
</dbReference>
<dbReference type="RefSeq" id="NP_001311151.1">
    <property type="nucleotide sequence ID" value="NM_001324222.1"/>
</dbReference>
<dbReference type="RefSeq" id="NP_001311152.1">
    <property type="nucleotide sequence ID" value="NM_001324223.1"/>
</dbReference>
<dbReference type="RefSeq" id="NP_001311153.1">
    <property type="nucleotide sequence ID" value="NM_001324224.1"/>
</dbReference>
<dbReference type="RefSeq" id="NP_001317592.1">
    <property type="nucleotide sequence ID" value="NM_001330663.2"/>
</dbReference>
<dbReference type="RefSeq" id="NP_001351117.1">
    <property type="nucleotide sequence ID" value="NM_001364188.2"/>
</dbReference>
<dbReference type="RefSeq" id="NP_002121.4">
    <property type="nucleotide sequence ID" value="NM_002130.7"/>
</dbReference>
<dbReference type="PDB" id="2P8U">
    <property type="method" value="X-ray"/>
    <property type="resolution" value="2.00 A"/>
    <property type="chains" value="A/B=16-470"/>
</dbReference>
<dbReference type="PDBsum" id="2P8U"/>
<dbReference type="SMR" id="Q01581"/>
<dbReference type="BioGRID" id="109400">
    <property type="interactions" value="133"/>
</dbReference>
<dbReference type="FunCoup" id="Q01581">
    <property type="interactions" value="1851"/>
</dbReference>
<dbReference type="IntAct" id="Q01581">
    <property type="interactions" value="49"/>
</dbReference>
<dbReference type="MINT" id="Q01581"/>
<dbReference type="STRING" id="9606.ENSP00000322706"/>
<dbReference type="DrugBank" id="DB07740">
    <property type="generic name" value="(7R,12R,13R)-13-formyl-12,14-dihydroxy-3,5,7-trimethyltetradeca-2,4-dienoic acid"/>
</dbReference>
<dbReference type="GuidetoPHARMACOLOGY" id="638"/>
<dbReference type="SwissLipids" id="SLP:000000724"/>
<dbReference type="GlyGen" id="Q01581">
    <property type="glycosylation" value="2 sites, 1 O-linked glycan (1 site)"/>
</dbReference>
<dbReference type="iPTMnet" id="Q01581"/>
<dbReference type="MetOSite" id="Q01581"/>
<dbReference type="PhosphoSitePlus" id="Q01581"/>
<dbReference type="SwissPalm" id="Q01581"/>
<dbReference type="BioMuta" id="HMGCS1"/>
<dbReference type="DMDM" id="1708239"/>
<dbReference type="jPOST" id="Q01581"/>
<dbReference type="MassIVE" id="Q01581"/>
<dbReference type="PaxDb" id="9606-ENSP00000322706"/>
<dbReference type="PeptideAtlas" id="Q01581"/>
<dbReference type="ProteomicsDB" id="57972"/>
<dbReference type="Pumba" id="Q01581"/>
<dbReference type="Antibodypedia" id="23240">
    <property type="antibodies" value="237 antibodies from 32 providers"/>
</dbReference>
<dbReference type="DNASU" id="3157"/>
<dbReference type="Ensembl" id="ENST00000325110.11">
    <property type="protein sequence ID" value="ENSP00000322706.6"/>
    <property type="gene ID" value="ENSG00000112972.16"/>
</dbReference>
<dbReference type="Ensembl" id="ENST00000433297.2">
    <property type="protein sequence ID" value="ENSP00000399402.2"/>
    <property type="gene ID" value="ENSG00000112972.16"/>
</dbReference>
<dbReference type="GeneID" id="3157"/>
<dbReference type="KEGG" id="hsa:3157"/>
<dbReference type="MANE-Select" id="ENST00000325110.11">
    <property type="protein sequence ID" value="ENSP00000322706.6"/>
    <property type="RefSeq nucleotide sequence ID" value="NM_001098272.3"/>
    <property type="RefSeq protein sequence ID" value="NP_001091742.1"/>
</dbReference>
<dbReference type="UCSC" id="uc003jnq.6">
    <property type="organism name" value="human"/>
</dbReference>
<dbReference type="AGR" id="HGNC:5007"/>
<dbReference type="CTD" id="3157"/>
<dbReference type="DisGeNET" id="3157"/>
<dbReference type="GeneCards" id="HMGCS1"/>
<dbReference type="HGNC" id="HGNC:5007">
    <property type="gene designation" value="HMGCS1"/>
</dbReference>
<dbReference type="HPA" id="ENSG00000112972">
    <property type="expression patterns" value="Tissue enhanced (liver)"/>
</dbReference>
<dbReference type="MalaCards" id="HMGCS1"/>
<dbReference type="MIM" id="142940">
    <property type="type" value="gene"/>
</dbReference>
<dbReference type="neXtProt" id="NX_Q01581"/>
<dbReference type="OpenTargets" id="ENSG00000112972"/>
<dbReference type="PharmGKB" id="PA29337"/>
<dbReference type="VEuPathDB" id="HostDB:ENSG00000112972"/>
<dbReference type="eggNOG" id="KOG1393">
    <property type="taxonomic scope" value="Eukaryota"/>
</dbReference>
<dbReference type="GeneTree" id="ENSGT00390000006096"/>
<dbReference type="HOGENOM" id="CLU_008065_0_1_1"/>
<dbReference type="InParanoid" id="Q01581"/>
<dbReference type="OMA" id="DDAYNWI"/>
<dbReference type="OrthoDB" id="1269963at2759"/>
<dbReference type="PAN-GO" id="Q01581">
    <property type="GO annotations" value="4 GO annotations based on evolutionary models"/>
</dbReference>
<dbReference type="PhylomeDB" id="Q01581"/>
<dbReference type="TreeFam" id="TF105361"/>
<dbReference type="BioCyc" id="MetaCyc:ENSG00000112972-MONOMER"/>
<dbReference type="BRENDA" id="2.3.3.10">
    <property type="organism ID" value="2681"/>
</dbReference>
<dbReference type="PathwayCommons" id="Q01581"/>
<dbReference type="Reactome" id="R-HSA-191273">
    <property type="pathway name" value="Cholesterol biosynthesis"/>
</dbReference>
<dbReference type="Reactome" id="R-HSA-1989781">
    <property type="pathway name" value="PPARA activates gene expression"/>
</dbReference>
<dbReference type="Reactome" id="R-HSA-2426168">
    <property type="pathway name" value="Activation of gene expression by SREBF (SREBP)"/>
</dbReference>
<dbReference type="SignaLink" id="Q01581"/>
<dbReference type="UniPathway" id="UPA00058">
    <property type="reaction ID" value="UER00102"/>
</dbReference>
<dbReference type="BioGRID-ORCS" id="3157">
    <property type="hits" value="781 hits in 1182 CRISPR screens"/>
</dbReference>
<dbReference type="ChiTaRS" id="HMGCS1">
    <property type="organism name" value="human"/>
</dbReference>
<dbReference type="EvolutionaryTrace" id="Q01581"/>
<dbReference type="GenomeRNAi" id="3157"/>
<dbReference type="Pharos" id="Q01581">
    <property type="development level" value="Tchem"/>
</dbReference>
<dbReference type="PRO" id="PR:Q01581"/>
<dbReference type="Proteomes" id="UP000005640">
    <property type="component" value="Chromosome 5"/>
</dbReference>
<dbReference type="RNAct" id="Q01581">
    <property type="molecule type" value="protein"/>
</dbReference>
<dbReference type="Bgee" id="ENSG00000112972">
    <property type="expression patterns" value="Expressed in adrenal tissue and 204 other cell types or tissues"/>
</dbReference>
<dbReference type="ExpressionAtlas" id="Q01581">
    <property type="expression patterns" value="baseline and differential"/>
</dbReference>
<dbReference type="GO" id="GO:0005737">
    <property type="term" value="C:cytoplasm"/>
    <property type="evidence" value="ECO:0000304"/>
    <property type="project" value="ProtInc"/>
</dbReference>
<dbReference type="GO" id="GO:0005829">
    <property type="term" value="C:cytosol"/>
    <property type="evidence" value="ECO:0000304"/>
    <property type="project" value="Reactome"/>
</dbReference>
<dbReference type="GO" id="GO:0004421">
    <property type="term" value="F:hydroxymethylglutaryl-CoA synthase activity"/>
    <property type="evidence" value="ECO:0000318"/>
    <property type="project" value="GO_Central"/>
</dbReference>
<dbReference type="GO" id="GO:0042803">
    <property type="term" value="F:protein homodimerization activity"/>
    <property type="evidence" value="ECO:0000314"/>
    <property type="project" value="UniProtKB"/>
</dbReference>
<dbReference type="GO" id="GO:0006084">
    <property type="term" value="P:acetyl-CoA metabolic process"/>
    <property type="evidence" value="ECO:0000318"/>
    <property type="project" value="GO_Central"/>
</dbReference>
<dbReference type="GO" id="GO:0006695">
    <property type="term" value="P:cholesterol biosynthetic process"/>
    <property type="evidence" value="ECO:0000304"/>
    <property type="project" value="Reactome"/>
</dbReference>
<dbReference type="GO" id="GO:0010142">
    <property type="term" value="P:farnesyl diphosphate biosynthetic process, mevalonate pathway"/>
    <property type="evidence" value="ECO:0000318"/>
    <property type="project" value="GO_Central"/>
</dbReference>
<dbReference type="GO" id="GO:0006629">
    <property type="term" value="P:lipid metabolic process"/>
    <property type="evidence" value="ECO:0000303"/>
    <property type="project" value="ProtInc"/>
</dbReference>
<dbReference type="CDD" id="cd00827">
    <property type="entry name" value="init_cond_enzymes"/>
    <property type="match status" value="1"/>
</dbReference>
<dbReference type="FunFam" id="3.40.47.10:FF:000008">
    <property type="entry name" value="3-hydroxy-3-methylglutaryl coenzyme A synthase"/>
    <property type="match status" value="1"/>
</dbReference>
<dbReference type="Gene3D" id="3.40.47.10">
    <property type="match status" value="1"/>
</dbReference>
<dbReference type="InterPro" id="IPR000590">
    <property type="entry name" value="HMG_CoA_synt_AS"/>
</dbReference>
<dbReference type="InterPro" id="IPR013746">
    <property type="entry name" value="HMG_CoA_synt_C_dom"/>
</dbReference>
<dbReference type="InterPro" id="IPR013528">
    <property type="entry name" value="HMG_CoA_synth_N"/>
</dbReference>
<dbReference type="InterPro" id="IPR010122">
    <property type="entry name" value="HMG_CoA_synthase_euk"/>
</dbReference>
<dbReference type="InterPro" id="IPR016039">
    <property type="entry name" value="Thiolase-like"/>
</dbReference>
<dbReference type="NCBIfam" id="TIGR01833">
    <property type="entry name" value="HMG-CoA-S_euk"/>
    <property type="match status" value="1"/>
</dbReference>
<dbReference type="PANTHER" id="PTHR43323">
    <property type="entry name" value="3-HYDROXY-3-METHYLGLUTARYL COENZYME A SYNTHASE"/>
    <property type="match status" value="1"/>
</dbReference>
<dbReference type="PANTHER" id="PTHR43323:SF4">
    <property type="entry name" value="HYDROXYMETHYLGLUTARYL-COA SYNTHASE, CYTOPLASMIC"/>
    <property type="match status" value="1"/>
</dbReference>
<dbReference type="Pfam" id="PF08540">
    <property type="entry name" value="HMG_CoA_synt_C"/>
    <property type="match status" value="1"/>
</dbReference>
<dbReference type="Pfam" id="PF01154">
    <property type="entry name" value="HMG_CoA_synt_N"/>
    <property type="match status" value="1"/>
</dbReference>
<dbReference type="SUPFAM" id="SSF53901">
    <property type="entry name" value="Thiolase-like"/>
    <property type="match status" value="2"/>
</dbReference>
<dbReference type="PROSITE" id="PS01226">
    <property type="entry name" value="HMG_COA_SYNTHASE"/>
    <property type="match status" value="1"/>
</dbReference>
<accession>Q01581</accession>
<accession>B2RDL8</accession>
<sequence>MPGSLPLNAEACWPKDVGIVALEIYFPSQYVDQAELEKYDGVDAGKYTIGLGQAKMGFCTDREDINSLCMTVVQNLMERNNLSYDCIGRLEVGTETIIDKSKSVKTNLMQLFEESGNTDIEGIDTTNACYGGTAAVFNAVNWIESSSWDGRYALVVAGDIAVYATGNARPTGGVGAVALLIGPNAPLIFERGLRGTHMQHAYDFYKPDMLSEYPIVDGKLSIQCYLSALDRCYSVYCKKIHAQWQKEGNDKDFTLNDFGFMIFHSPYCKLVQKSLARMLLNDFLNDQNRDKNSIYSGLEAFGDVKLEDTYFDRDVEKAFMKASSELFSQKTKASLLVSNQNGNMYTSSVYGSLASVLAQYSPQQLAGKRIGVFSYGSGLAATLYSLKVTQDATPGSALDKITASLCDLKSRLDSRTGVAPDVFAENMKLREDTHHLVNYIPQGSIDSLFEGTWYLVRVDEKHRRTYARRPTPNDDTLDEGVGLVHSNIATEHIPSPAKKVPRLPATAAEPEAAVISNGEH</sequence>
<feature type="chain" id="PRO_0000213747" description="Hydroxymethylglutaryl-CoA synthase, cytoplasmic">
    <location>
        <begin position="1"/>
        <end position="520"/>
    </location>
</feature>
<feature type="region of interest" description="Disordered" evidence="3">
    <location>
        <begin position="492"/>
        <end position="520"/>
    </location>
</feature>
<feature type="active site" description="Proton donor/acceptor" evidence="2">
    <location>
        <position position="95"/>
    </location>
</feature>
<feature type="active site" description="Acyl-thioester intermediate">
    <location>
        <position position="129"/>
    </location>
</feature>
<feature type="active site" description="Proton donor/acceptor" evidence="2">
    <location>
        <position position="264"/>
    </location>
</feature>
<feature type="binding site" evidence="1">
    <location>
        <position position="43"/>
    </location>
    <ligand>
        <name>(3S)-3-hydroxy-3-methylglutaryl-CoA</name>
        <dbReference type="ChEBI" id="CHEBI:43074"/>
    </ligand>
</feature>
<feature type="binding site" evidence="4 11">
    <location>
        <begin position="44"/>
        <end position="46"/>
    </location>
    <ligand>
        <name>CoA</name>
        <dbReference type="ChEBI" id="CHEBI:57287"/>
    </ligand>
</feature>
<feature type="binding site" evidence="1">
    <location>
        <position position="44"/>
    </location>
    <ligand>
        <name>(3S)-3-hydroxy-3-methylglutaryl-CoA</name>
        <dbReference type="ChEBI" id="CHEBI:43074"/>
    </ligand>
</feature>
<feature type="binding site" evidence="1">
    <location>
        <position position="129"/>
    </location>
    <ligand>
        <name>(3S)-3-hydroxy-3-methylglutaryl-CoA</name>
        <dbReference type="ChEBI" id="CHEBI:43074"/>
    </ligand>
</feature>
<feature type="binding site" evidence="1">
    <location>
        <position position="167"/>
    </location>
    <ligand>
        <name>(3S)-3-hydroxy-3-methylglutaryl-CoA</name>
        <dbReference type="ChEBI" id="CHEBI:43074"/>
    </ligand>
</feature>
<feature type="binding site" evidence="4 11">
    <location>
        <position position="167"/>
    </location>
    <ligand>
        <name>CoA</name>
        <dbReference type="ChEBI" id="CHEBI:57287"/>
    </ligand>
</feature>
<feature type="binding site" evidence="1">
    <location>
        <position position="171"/>
    </location>
    <ligand>
        <name>(3S)-3-hydroxy-3-methylglutaryl-CoA</name>
        <dbReference type="ChEBI" id="CHEBI:43074"/>
    </ligand>
</feature>
<feature type="binding site" evidence="1">
    <location>
        <position position="221"/>
    </location>
    <ligand>
        <name>(3S)-3-hydroxy-3-methylglutaryl-CoA</name>
        <dbReference type="ChEBI" id="CHEBI:43074"/>
    </ligand>
</feature>
<feature type="binding site" evidence="4 11">
    <location>
        <position position="221"/>
    </location>
    <ligand>
        <name>CoA</name>
        <dbReference type="ChEBI" id="CHEBI:57287"/>
    </ligand>
</feature>
<feature type="binding site" evidence="1">
    <location>
        <position position="264"/>
    </location>
    <ligand>
        <name>(3S)-3-hydroxy-3-methylglutaryl-CoA</name>
        <dbReference type="ChEBI" id="CHEBI:43074"/>
    </ligand>
</feature>
<feature type="binding site" evidence="4 11">
    <location>
        <position position="269"/>
    </location>
    <ligand>
        <name>CoA</name>
        <dbReference type="ChEBI" id="CHEBI:57287"/>
    </ligand>
</feature>
<feature type="binding site" evidence="1">
    <location>
        <position position="273"/>
    </location>
    <ligand>
        <name>(3S)-3-hydroxy-3-methylglutaryl-CoA</name>
        <dbReference type="ChEBI" id="CHEBI:43074"/>
    </ligand>
</feature>
<feature type="binding site" evidence="4 11">
    <location>
        <position position="273"/>
    </location>
    <ligand>
        <name>CoA</name>
        <dbReference type="ChEBI" id="CHEBI:57287"/>
    </ligand>
</feature>
<feature type="binding site" evidence="1">
    <location>
        <position position="343"/>
    </location>
    <ligand>
        <name>(3S)-3-hydroxy-3-methylglutaryl-CoA</name>
        <dbReference type="ChEBI" id="CHEBI:43074"/>
    </ligand>
</feature>
<feature type="binding site" evidence="1">
    <location>
        <position position="377"/>
    </location>
    <ligand>
        <name>(3S)-3-hydroxy-3-methylglutaryl-CoA</name>
        <dbReference type="ChEBI" id="CHEBI:43074"/>
    </ligand>
</feature>
<feature type="modified residue" description="Phosphoserine" evidence="16 17">
    <location>
        <position position="4"/>
    </location>
</feature>
<feature type="modified residue" description="N6-acetyllysine" evidence="13">
    <location>
        <position position="46"/>
    </location>
</feature>
<feature type="modified residue" description="N6-acetyllysine" evidence="13">
    <location>
        <position position="273"/>
    </location>
</feature>
<feature type="modified residue" description="Phosphothreonine" evidence="12">
    <location>
        <position position="476"/>
    </location>
</feature>
<feature type="modified residue" description="Phosphoserine" evidence="12 14 15 16 17 18">
    <location>
        <position position="495"/>
    </location>
</feature>
<feature type="modified residue" description="Phosphoserine" evidence="17">
    <location>
        <position position="516"/>
    </location>
</feature>
<feature type="mutagenesis site" description="Loss of activity." evidence="5">
    <original>C</original>
    <variation>A</variation>
    <variation>S</variation>
    <location>
        <position position="129"/>
    </location>
</feature>
<feature type="sequence conflict" description="In Ref. 1; CAA47061." evidence="7" ref="1">
    <original>G</original>
    <variation>A</variation>
    <location>
        <position position="248"/>
    </location>
</feature>
<feature type="sequence conflict" description="In Ref. 1; CAA47061." evidence="7" ref="1">
    <original>K</original>
    <variation>N</variation>
    <location>
        <position position="251"/>
    </location>
</feature>
<feature type="sequence conflict" description="In Ref. 1; CAA47061." evidence="7" ref="1">
    <original>E</original>
    <variation>K</variation>
    <location>
        <position position="299"/>
    </location>
</feature>
<feature type="sequence conflict" description="In Ref. 1; CAA47061." evidence="7" ref="1">
    <original>Q</original>
    <variation>H</variation>
    <location>
        <position position="364"/>
    </location>
</feature>
<feature type="sequence conflict" description="In Ref. 1; CAA47061." evidence="7" ref="1">
    <original>P</original>
    <variation>Q</variation>
    <location>
        <position position="420"/>
    </location>
</feature>
<feature type="sequence conflict" description="In Ref. 1; CAA47061." evidence="7" ref="1">
    <original>EH</original>
    <variation>VW</variation>
    <location>
        <begin position="519"/>
        <end position="520"/>
    </location>
</feature>
<feature type="strand" evidence="19">
    <location>
        <begin position="18"/>
        <end position="25"/>
    </location>
</feature>
<feature type="strand" evidence="19">
    <location>
        <begin position="28"/>
        <end position="32"/>
    </location>
</feature>
<feature type="helix" evidence="19">
    <location>
        <begin position="33"/>
        <end position="40"/>
    </location>
</feature>
<feature type="helix" evidence="19">
    <location>
        <begin position="46"/>
        <end position="51"/>
    </location>
</feature>
<feature type="strand" evidence="19">
    <location>
        <begin position="55"/>
        <end position="57"/>
    </location>
</feature>
<feature type="helix" evidence="19">
    <location>
        <begin position="65"/>
        <end position="79"/>
    </location>
</feature>
<feature type="helix" evidence="19">
    <location>
        <begin position="84"/>
        <end position="86"/>
    </location>
</feature>
<feature type="strand" evidence="19">
    <location>
        <begin position="87"/>
        <end position="93"/>
    </location>
</feature>
<feature type="strand" evidence="19">
    <location>
        <begin position="100"/>
        <end position="102"/>
    </location>
</feature>
<feature type="helix" evidence="19">
    <location>
        <begin position="104"/>
        <end position="108"/>
    </location>
</feature>
<feature type="helix" evidence="19">
    <location>
        <begin position="109"/>
        <end position="111"/>
    </location>
</feature>
<feature type="turn" evidence="19">
    <location>
        <begin position="112"/>
        <end position="116"/>
    </location>
</feature>
<feature type="strand" evidence="19">
    <location>
        <begin position="124"/>
        <end position="127"/>
    </location>
</feature>
<feature type="helix" evidence="19">
    <location>
        <begin position="128"/>
        <end position="130"/>
    </location>
</feature>
<feature type="helix" evidence="19">
    <location>
        <begin position="131"/>
        <end position="143"/>
    </location>
</feature>
<feature type="strand" evidence="19">
    <location>
        <begin position="152"/>
        <end position="161"/>
    </location>
</feature>
<feature type="helix" evidence="19">
    <location>
        <begin position="169"/>
        <end position="171"/>
    </location>
</feature>
<feature type="strand" evidence="19">
    <location>
        <begin position="173"/>
        <end position="184"/>
    </location>
</feature>
<feature type="strand" evidence="19">
    <location>
        <begin position="186"/>
        <end position="189"/>
    </location>
</feature>
<feature type="strand" evidence="19">
    <location>
        <begin position="195"/>
        <end position="198"/>
    </location>
</feature>
<feature type="strand" evidence="19">
    <location>
        <begin position="203"/>
        <end position="205"/>
    </location>
</feature>
<feature type="helix" evidence="19">
    <location>
        <begin position="218"/>
        <end position="247"/>
    </location>
</feature>
<feature type="helix" evidence="19">
    <location>
        <begin position="255"/>
        <end position="257"/>
    </location>
</feature>
<feature type="strand" evidence="19">
    <location>
        <begin position="259"/>
        <end position="263"/>
    </location>
</feature>
<feature type="helix" evidence="19">
    <location>
        <begin position="268"/>
        <end position="285"/>
    </location>
</feature>
<feature type="helix" evidence="19">
    <location>
        <begin position="289"/>
        <end position="291"/>
    </location>
</feature>
<feature type="helix" evidence="19">
    <location>
        <begin position="293"/>
        <end position="295"/>
    </location>
</feature>
<feature type="helix" evidence="19">
    <location>
        <begin position="299"/>
        <end position="301"/>
    </location>
</feature>
<feature type="helix" evidence="19">
    <location>
        <begin position="306"/>
        <end position="308"/>
    </location>
</feature>
<feature type="helix" evidence="19">
    <location>
        <begin position="313"/>
        <end position="322"/>
    </location>
</feature>
<feature type="helix" evidence="19">
    <location>
        <begin position="324"/>
        <end position="330"/>
    </location>
</feature>
<feature type="helix" evidence="19">
    <location>
        <begin position="333"/>
        <end position="335"/>
    </location>
</feature>
<feature type="helix" evidence="19">
    <location>
        <begin position="336"/>
        <end position="341"/>
    </location>
</feature>
<feature type="helix" evidence="19">
    <location>
        <begin position="345"/>
        <end position="347"/>
    </location>
</feature>
<feature type="helix" evidence="19">
    <location>
        <begin position="348"/>
        <end position="359"/>
    </location>
</feature>
<feature type="helix" evidence="19">
    <location>
        <begin position="362"/>
        <end position="365"/>
    </location>
</feature>
<feature type="strand" evidence="19">
    <location>
        <begin position="369"/>
        <end position="376"/>
    </location>
</feature>
<feature type="turn" evidence="19">
    <location>
        <begin position="377"/>
        <end position="379"/>
    </location>
</feature>
<feature type="strand" evidence="19">
    <location>
        <begin position="380"/>
        <end position="388"/>
    </location>
</feature>
<feature type="helix" evidence="19">
    <location>
        <begin position="397"/>
        <end position="403"/>
    </location>
</feature>
<feature type="turn" evidence="19">
    <location>
        <begin position="404"/>
        <end position="407"/>
    </location>
</feature>
<feature type="helix" evidence="19">
    <location>
        <begin position="408"/>
        <end position="413"/>
    </location>
</feature>
<feature type="strand" evidence="19">
    <location>
        <begin position="415"/>
        <end position="417"/>
    </location>
</feature>
<feature type="helix" evidence="19">
    <location>
        <begin position="420"/>
        <end position="433"/>
    </location>
</feature>
<feature type="strand" evidence="19">
    <location>
        <begin position="453"/>
        <end position="458"/>
    </location>
</feature>
<feature type="strand" evidence="19">
    <location>
        <begin position="464"/>
        <end position="468"/>
    </location>
</feature>
<gene>
    <name evidence="10" type="primary">HMGCS1</name>
    <name type="synonym">HMGCS</name>
</gene>
<organism>
    <name type="scientific">Homo sapiens</name>
    <name type="common">Human</name>
    <dbReference type="NCBI Taxonomy" id="9606"/>
    <lineage>
        <taxon>Eukaryota</taxon>
        <taxon>Metazoa</taxon>
        <taxon>Chordata</taxon>
        <taxon>Craniata</taxon>
        <taxon>Vertebrata</taxon>
        <taxon>Euteleostomi</taxon>
        <taxon>Mammalia</taxon>
        <taxon>Eutheria</taxon>
        <taxon>Euarchontoglires</taxon>
        <taxon>Primates</taxon>
        <taxon>Haplorrhini</taxon>
        <taxon>Catarrhini</taxon>
        <taxon>Hominidae</taxon>
        <taxon>Homo</taxon>
    </lineage>
</organism>
<reference key="1">
    <citation type="journal article" date="1992" name="Biochim. Biophys. Acta">
        <title>Amplification and direct sequencing of a cDNA encoding human cytosolic 3-hydroxy-3-methylglutaryl-coenzyme A synthase.</title>
        <authorList>
            <person name="Russ A.P."/>
            <person name="Ruzicka V."/>
            <person name="Maerz W."/>
            <person name="Appelhans H."/>
            <person name="Gross W."/>
        </authorList>
    </citation>
    <scope>NUCLEOTIDE SEQUENCE [MRNA]</scope>
    <scope>SUBCELLULAR LOCATION</scope>
    <source>
        <tissue>Fibroblast</tissue>
    </source>
</reference>
<reference key="2">
    <citation type="journal article" date="1994" name="Arch. Biochem. Biophys.">
        <title>Human cytoplasmic 3-hydroxy-3-methylglutaryl coenzyme A synthase: expression, purification, and characterization of recombinant wild-type and Cys129 mutant enzymes.</title>
        <authorList>
            <person name="Rokosz L.L."/>
            <person name="Boulton D.A."/>
            <person name="Butkiewicz E.A."/>
            <person name="Sanyal G."/>
            <person name="Cueto M.A."/>
            <person name="Lachance P.A."/>
            <person name="Hermes J.D."/>
        </authorList>
    </citation>
    <scope>NUCLEOTIDE SEQUENCE [MRNA]</scope>
    <scope>MUTAGENESIS OF CYS-129</scope>
    <scope>FUNCTION</scope>
    <scope>CATALYTIC ACTIVITY</scope>
    <scope>BIOPHYSICOCHEMICAL PROPERTIES</scope>
    <source>
        <tissue>Fetal adrenal gland</tissue>
    </source>
</reference>
<reference key="3">
    <citation type="submission" date="2003-05" db="EMBL/GenBank/DDBJ databases">
        <title>Cloning of human full-length CDSs in BD Creator(TM) system donor vector.</title>
        <authorList>
            <person name="Kalnine N."/>
            <person name="Chen X."/>
            <person name="Rolfs A."/>
            <person name="Halleck A."/>
            <person name="Hines L."/>
            <person name="Eisenstein S."/>
            <person name="Koundinya M."/>
            <person name="Raphael J."/>
            <person name="Moreira D."/>
            <person name="Kelley T."/>
            <person name="LaBaer J."/>
            <person name="Lin Y."/>
            <person name="Phelan M."/>
            <person name="Farmer A."/>
        </authorList>
    </citation>
    <scope>NUCLEOTIDE SEQUENCE [LARGE SCALE MRNA]</scope>
</reference>
<reference key="4">
    <citation type="journal article" date="2004" name="Nat. Genet.">
        <title>Complete sequencing and characterization of 21,243 full-length human cDNAs.</title>
        <authorList>
            <person name="Ota T."/>
            <person name="Suzuki Y."/>
            <person name="Nishikawa T."/>
            <person name="Otsuki T."/>
            <person name="Sugiyama T."/>
            <person name="Irie R."/>
            <person name="Wakamatsu A."/>
            <person name="Hayashi K."/>
            <person name="Sato H."/>
            <person name="Nagai K."/>
            <person name="Kimura K."/>
            <person name="Makita H."/>
            <person name="Sekine M."/>
            <person name="Obayashi M."/>
            <person name="Nishi T."/>
            <person name="Shibahara T."/>
            <person name="Tanaka T."/>
            <person name="Ishii S."/>
            <person name="Yamamoto J."/>
            <person name="Saito K."/>
            <person name="Kawai Y."/>
            <person name="Isono Y."/>
            <person name="Nakamura Y."/>
            <person name="Nagahari K."/>
            <person name="Murakami K."/>
            <person name="Yasuda T."/>
            <person name="Iwayanagi T."/>
            <person name="Wagatsuma M."/>
            <person name="Shiratori A."/>
            <person name="Sudo H."/>
            <person name="Hosoiri T."/>
            <person name="Kaku Y."/>
            <person name="Kodaira H."/>
            <person name="Kondo H."/>
            <person name="Sugawara M."/>
            <person name="Takahashi M."/>
            <person name="Kanda K."/>
            <person name="Yokoi T."/>
            <person name="Furuya T."/>
            <person name="Kikkawa E."/>
            <person name="Omura Y."/>
            <person name="Abe K."/>
            <person name="Kamihara K."/>
            <person name="Katsuta N."/>
            <person name="Sato K."/>
            <person name="Tanikawa M."/>
            <person name="Yamazaki M."/>
            <person name="Ninomiya K."/>
            <person name="Ishibashi T."/>
            <person name="Yamashita H."/>
            <person name="Murakawa K."/>
            <person name="Fujimori K."/>
            <person name="Tanai H."/>
            <person name="Kimata M."/>
            <person name="Watanabe M."/>
            <person name="Hiraoka S."/>
            <person name="Chiba Y."/>
            <person name="Ishida S."/>
            <person name="Ono Y."/>
            <person name="Takiguchi S."/>
            <person name="Watanabe S."/>
            <person name="Yosida M."/>
            <person name="Hotuta T."/>
            <person name="Kusano J."/>
            <person name="Kanehori K."/>
            <person name="Takahashi-Fujii A."/>
            <person name="Hara H."/>
            <person name="Tanase T.-O."/>
            <person name="Nomura Y."/>
            <person name="Togiya S."/>
            <person name="Komai F."/>
            <person name="Hara R."/>
            <person name="Takeuchi K."/>
            <person name="Arita M."/>
            <person name="Imose N."/>
            <person name="Musashino K."/>
            <person name="Yuuki H."/>
            <person name="Oshima A."/>
            <person name="Sasaki N."/>
            <person name="Aotsuka S."/>
            <person name="Yoshikawa Y."/>
            <person name="Matsunawa H."/>
            <person name="Ichihara T."/>
            <person name="Shiohata N."/>
            <person name="Sano S."/>
            <person name="Moriya S."/>
            <person name="Momiyama H."/>
            <person name="Satoh N."/>
            <person name="Takami S."/>
            <person name="Terashima Y."/>
            <person name="Suzuki O."/>
            <person name="Nakagawa S."/>
            <person name="Senoh A."/>
            <person name="Mizoguchi H."/>
            <person name="Goto Y."/>
            <person name="Shimizu F."/>
            <person name="Wakebe H."/>
            <person name="Hishigaki H."/>
            <person name="Watanabe T."/>
            <person name="Sugiyama A."/>
            <person name="Takemoto M."/>
            <person name="Kawakami B."/>
            <person name="Yamazaki M."/>
            <person name="Watanabe K."/>
            <person name="Kumagai A."/>
            <person name="Itakura S."/>
            <person name="Fukuzumi Y."/>
            <person name="Fujimori Y."/>
            <person name="Komiyama M."/>
            <person name="Tashiro H."/>
            <person name="Tanigami A."/>
            <person name="Fujiwara T."/>
            <person name="Ono T."/>
            <person name="Yamada K."/>
            <person name="Fujii Y."/>
            <person name="Ozaki K."/>
            <person name="Hirao M."/>
            <person name="Ohmori Y."/>
            <person name="Kawabata A."/>
            <person name="Hikiji T."/>
            <person name="Kobatake N."/>
            <person name="Inagaki H."/>
            <person name="Ikema Y."/>
            <person name="Okamoto S."/>
            <person name="Okitani R."/>
            <person name="Kawakami T."/>
            <person name="Noguchi S."/>
            <person name="Itoh T."/>
            <person name="Shigeta K."/>
            <person name="Senba T."/>
            <person name="Matsumura K."/>
            <person name="Nakajima Y."/>
            <person name="Mizuno T."/>
            <person name="Morinaga M."/>
            <person name="Sasaki M."/>
            <person name="Togashi T."/>
            <person name="Oyama M."/>
            <person name="Hata H."/>
            <person name="Watanabe M."/>
            <person name="Komatsu T."/>
            <person name="Mizushima-Sugano J."/>
            <person name="Satoh T."/>
            <person name="Shirai Y."/>
            <person name="Takahashi Y."/>
            <person name="Nakagawa K."/>
            <person name="Okumura K."/>
            <person name="Nagase T."/>
            <person name="Nomura N."/>
            <person name="Kikuchi H."/>
            <person name="Masuho Y."/>
            <person name="Yamashita R."/>
            <person name="Nakai K."/>
            <person name="Yada T."/>
            <person name="Nakamura Y."/>
            <person name="Ohara O."/>
            <person name="Isogai T."/>
            <person name="Sugano S."/>
        </authorList>
    </citation>
    <scope>NUCLEOTIDE SEQUENCE [LARGE SCALE MRNA]</scope>
    <source>
        <tissue>Placenta</tissue>
    </source>
</reference>
<reference key="5">
    <citation type="submission" date="2005-07" db="EMBL/GenBank/DDBJ databases">
        <authorList>
            <person name="Mural R.J."/>
            <person name="Istrail S."/>
            <person name="Sutton G.G."/>
            <person name="Florea L."/>
            <person name="Halpern A.L."/>
            <person name="Mobarry C.M."/>
            <person name="Lippert R."/>
            <person name="Walenz B."/>
            <person name="Shatkay H."/>
            <person name="Dew I."/>
            <person name="Miller J.R."/>
            <person name="Flanigan M.J."/>
            <person name="Edwards N.J."/>
            <person name="Bolanos R."/>
            <person name="Fasulo D."/>
            <person name="Halldorsson B.V."/>
            <person name="Hannenhalli S."/>
            <person name="Turner R."/>
            <person name="Yooseph S."/>
            <person name="Lu F."/>
            <person name="Nusskern D.R."/>
            <person name="Shue B.C."/>
            <person name="Zheng X.H."/>
            <person name="Zhong F."/>
            <person name="Delcher A.L."/>
            <person name="Huson D.H."/>
            <person name="Kravitz S.A."/>
            <person name="Mouchard L."/>
            <person name="Reinert K."/>
            <person name="Remington K.A."/>
            <person name="Clark A.G."/>
            <person name="Waterman M.S."/>
            <person name="Eichler E.E."/>
            <person name="Adams M.D."/>
            <person name="Hunkapiller M.W."/>
            <person name="Myers E.W."/>
            <person name="Venter J.C."/>
        </authorList>
    </citation>
    <scope>NUCLEOTIDE SEQUENCE [LARGE SCALE GENOMIC DNA]</scope>
</reference>
<reference key="6">
    <citation type="journal article" date="2004" name="Genome Res.">
        <title>The status, quality, and expansion of the NIH full-length cDNA project: the Mammalian Gene Collection (MGC).</title>
        <authorList>
            <consortium name="The MGC Project Team"/>
        </authorList>
    </citation>
    <scope>NUCLEOTIDE SEQUENCE [LARGE SCALE MRNA]</scope>
    <source>
        <tissue>Lung</tissue>
    </source>
</reference>
<reference key="7">
    <citation type="journal article" date="2008" name="Proc. Natl. Acad. Sci. U.S.A.">
        <title>A quantitative atlas of mitotic phosphorylation.</title>
        <authorList>
            <person name="Dephoure N."/>
            <person name="Zhou C."/>
            <person name="Villen J."/>
            <person name="Beausoleil S.A."/>
            <person name="Bakalarski C.E."/>
            <person name="Elledge S.J."/>
            <person name="Gygi S.P."/>
        </authorList>
    </citation>
    <scope>PHOSPHORYLATION [LARGE SCALE ANALYSIS] AT THR-476 AND SER-495</scope>
    <scope>IDENTIFICATION BY MASS SPECTROMETRY [LARGE SCALE ANALYSIS]</scope>
    <source>
        <tissue>Cervix carcinoma</tissue>
    </source>
</reference>
<reference key="8">
    <citation type="journal article" date="2009" name="Anal. Chem.">
        <title>Lys-N and trypsin cover complementary parts of the phosphoproteome in a refined SCX-based approach.</title>
        <authorList>
            <person name="Gauci S."/>
            <person name="Helbig A.O."/>
            <person name="Slijper M."/>
            <person name="Krijgsveld J."/>
            <person name="Heck A.J."/>
            <person name="Mohammed S."/>
        </authorList>
    </citation>
    <scope>IDENTIFICATION BY MASS SPECTROMETRY [LARGE SCALE ANALYSIS]</scope>
</reference>
<reference key="9">
    <citation type="journal article" date="2009" name="Sci. Signal.">
        <title>Quantitative phosphoproteomic analysis of T cell receptor signaling reveals system-wide modulation of protein-protein interactions.</title>
        <authorList>
            <person name="Mayya V."/>
            <person name="Lundgren D.H."/>
            <person name="Hwang S.-I."/>
            <person name="Rezaul K."/>
            <person name="Wu L."/>
            <person name="Eng J.K."/>
            <person name="Rodionov V."/>
            <person name="Han D.K."/>
        </authorList>
    </citation>
    <scope>PHOSPHORYLATION [LARGE SCALE ANALYSIS] AT SER-495</scope>
    <scope>IDENTIFICATION BY MASS SPECTROMETRY [LARGE SCALE ANALYSIS]</scope>
    <source>
        <tissue>Leukemic T-cell</tissue>
    </source>
</reference>
<reference key="10">
    <citation type="journal article" date="2009" name="Science">
        <title>Lysine acetylation targets protein complexes and co-regulates major cellular functions.</title>
        <authorList>
            <person name="Choudhary C."/>
            <person name="Kumar C."/>
            <person name="Gnad F."/>
            <person name="Nielsen M.L."/>
            <person name="Rehman M."/>
            <person name="Walther T.C."/>
            <person name="Olsen J.V."/>
            <person name="Mann M."/>
        </authorList>
    </citation>
    <scope>ACETYLATION [LARGE SCALE ANALYSIS] AT LYS-46 AND LYS-273</scope>
    <scope>IDENTIFICATION BY MASS SPECTROMETRY [LARGE SCALE ANALYSIS]</scope>
</reference>
<reference key="11">
    <citation type="journal article" date="2010" name="Sci. Signal.">
        <title>Quantitative phosphoproteomics reveals widespread full phosphorylation site occupancy during mitosis.</title>
        <authorList>
            <person name="Olsen J.V."/>
            <person name="Vermeulen M."/>
            <person name="Santamaria A."/>
            <person name="Kumar C."/>
            <person name="Miller M.L."/>
            <person name="Jensen L.J."/>
            <person name="Gnad F."/>
            <person name="Cox J."/>
            <person name="Jensen T.S."/>
            <person name="Nigg E.A."/>
            <person name="Brunak S."/>
            <person name="Mann M."/>
        </authorList>
    </citation>
    <scope>PHOSPHORYLATION [LARGE SCALE ANALYSIS] AT SER-495</scope>
    <scope>IDENTIFICATION BY MASS SPECTROMETRY [LARGE SCALE ANALYSIS]</scope>
    <source>
        <tissue>Cervix carcinoma</tissue>
    </source>
</reference>
<reference key="12">
    <citation type="journal article" date="2011" name="BMC Syst. Biol.">
        <title>Initial characterization of the human central proteome.</title>
        <authorList>
            <person name="Burkard T.R."/>
            <person name="Planyavsky M."/>
            <person name="Kaupe I."/>
            <person name="Breitwieser F.P."/>
            <person name="Buerckstuemmer T."/>
            <person name="Bennett K.L."/>
            <person name="Superti-Furga G."/>
            <person name="Colinge J."/>
        </authorList>
    </citation>
    <scope>IDENTIFICATION BY MASS SPECTROMETRY [LARGE SCALE ANALYSIS]</scope>
</reference>
<reference key="13">
    <citation type="journal article" date="2011" name="Sci. Signal.">
        <title>System-wide temporal characterization of the proteome and phosphoproteome of human embryonic stem cell differentiation.</title>
        <authorList>
            <person name="Rigbolt K.T."/>
            <person name="Prokhorova T.A."/>
            <person name="Akimov V."/>
            <person name="Henningsen J."/>
            <person name="Johansen P.T."/>
            <person name="Kratchmarova I."/>
            <person name="Kassem M."/>
            <person name="Mann M."/>
            <person name="Olsen J.V."/>
            <person name="Blagoev B."/>
        </authorList>
    </citation>
    <scope>PHOSPHORYLATION [LARGE SCALE ANALYSIS] AT SER-4 AND SER-495</scope>
    <scope>IDENTIFICATION BY MASS SPECTROMETRY [LARGE SCALE ANALYSIS]</scope>
</reference>
<reference key="14">
    <citation type="journal article" date="2013" name="J. Proteome Res.">
        <title>Toward a comprehensive characterization of a human cancer cell phosphoproteome.</title>
        <authorList>
            <person name="Zhou H."/>
            <person name="Di Palma S."/>
            <person name="Preisinger C."/>
            <person name="Peng M."/>
            <person name="Polat A.N."/>
            <person name="Heck A.J."/>
            <person name="Mohammed S."/>
        </authorList>
    </citation>
    <scope>PHOSPHORYLATION [LARGE SCALE ANALYSIS] AT SER-4; SER-495 AND SER-516</scope>
    <scope>IDENTIFICATION BY MASS SPECTROMETRY [LARGE SCALE ANALYSIS]</scope>
    <source>
        <tissue>Cervix carcinoma</tissue>
        <tissue>Erythroleukemia</tissue>
    </source>
</reference>
<reference key="15">
    <citation type="journal article" date="2014" name="J. Proteomics">
        <title>An enzyme assisted RP-RPLC approach for in-depth analysis of human liver phosphoproteome.</title>
        <authorList>
            <person name="Bian Y."/>
            <person name="Song C."/>
            <person name="Cheng K."/>
            <person name="Dong M."/>
            <person name="Wang F."/>
            <person name="Huang J."/>
            <person name="Sun D."/>
            <person name="Wang L."/>
            <person name="Ye M."/>
            <person name="Zou H."/>
        </authorList>
    </citation>
    <scope>PHOSPHORYLATION [LARGE SCALE ANALYSIS] AT SER-495</scope>
    <scope>IDENTIFICATION BY MASS SPECTROMETRY [LARGE SCALE ANALYSIS]</scope>
    <source>
        <tissue>Liver</tissue>
    </source>
</reference>
<reference evidence="11" key="16">
    <citation type="journal article" date="2010" name="J. Mol. Biol.">
        <title>Crystal structures of human HMG-CoA synthase isoforms provide insights into inherited ketogenesis disorders and inhibitor design.</title>
        <authorList>
            <person name="Shafqat N."/>
            <person name="Turnbull A."/>
            <person name="Zschocke J."/>
            <person name="Oppermann U."/>
            <person name="Yue W.W."/>
        </authorList>
    </citation>
    <scope>X-RAY CRYSTALLOGRAPHY (2.00 ANGSTROMS) OF 16-470 OF HOMODIMER IN COMPLEX WITH COENZYME A</scope>
    <scope>SUBSTRATE-BINDING SITES</scope>
    <scope>REGION</scope>
    <scope>SUBUNIT</scope>
</reference>